<organism>
    <name type="scientific">Shewanella oneidensis (strain ATCC 700550 / JCM 31522 / CIP 106686 / LMG 19005 / NCIMB 14063 / MR-1)</name>
    <dbReference type="NCBI Taxonomy" id="211586"/>
    <lineage>
        <taxon>Bacteria</taxon>
        <taxon>Pseudomonadati</taxon>
        <taxon>Pseudomonadota</taxon>
        <taxon>Gammaproteobacteria</taxon>
        <taxon>Alteromonadales</taxon>
        <taxon>Shewanellaceae</taxon>
        <taxon>Shewanella</taxon>
    </lineage>
</organism>
<protein>
    <recommendedName>
        <fullName evidence="1">Arginine repressor</fullName>
    </recommendedName>
</protein>
<feature type="chain" id="PRO_0000205112" description="Arginine repressor">
    <location>
        <begin position="1"/>
        <end position="156"/>
    </location>
</feature>
<gene>
    <name evidence="1" type="primary">argR</name>
    <name type="ordered locus">SO_0769</name>
</gene>
<dbReference type="EMBL" id="AE014299">
    <property type="protein sequence ID" value="AAN53845.1"/>
    <property type="molecule type" value="Genomic_DNA"/>
</dbReference>
<dbReference type="RefSeq" id="NP_716400.1">
    <property type="nucleotide sequence ID" value="NC_004347.2"/>
</dbReference>
<dbReference type="RefSeq" id="WP_011071072.1">
    <property type="nucleotide sequence ID" value="NZ_CP053946.1"/>
</dbReference>
<dbReference type="SMR" id="Q8EIR6"/>
<dbReference type="STRING" id="211586.SO_0769"/>
<dbReference type="PaxDb" id="211586-SO_0769"/>
<dbReference type="GeneID" id="75190208"/>
<dbReference type="KEGG" id="son:SO_0769"/>
<dbReference type="PATRIC" id="fig|1028802.3.peg.1497"/>
<dbReference type="eggNOG" id="COG1438">
    <property type="taxonomic scope" value="Bacteria"/>
</dbReference>
<dbReference type="HOGENOM" id="CLU_097103_2_0_6"/>
<dbReference type="OrthoDB" id="7060358at2"/>
<dbReference type="PhylomeDB" id="Q8EIR6"/>
<dbReference type="BioCyc" id="SONE211586:G1GMP-720-MONOMER"/>
<dbReference type="UniPathway" id="UPA00068"/>
<dbReference type="Proteomes" id="UP000008186">
    <property type="component" value="Chromosome"/>
</dbReference>
<dbReference type="GO" id="GO:0005737">
    <property type="term" value="C:cytoplasm"/>
    <property type="evidence" value="ECO:0007669"/>
    <property type="project" value="UniProtKB-SubCell"/>
</dbReference>
<dbReference type="GO" id="GO:0005667">
    <property type="term" value="C:transcription regulator complex"/>
    <property type="evidence" value="ECO:0000318"/>
    <property type="project" value="GO_Central"/>
</dbReference>
<dbReference type="GO" id="GO:0034618">
    <property type="term" value="F:arginine binding"/>
    <property type="evidence" value="ECO:0007669"/>
    <property type="project" value="InterPro"/>
</dbReference>
<dbReference type="GO" id="GO:0000987">
    <property type="term" value="F:cis-regulatory region sequence-specific DNA binding"/>
    <property type="evidence" value="ECO:0000318"/>
    <property type="project" value="GO_Central"/>
</dbReference>
<dbReference type="GO" id="GO:0003700">
    <property type="term" value="F:DNA-binding transcription factor activity"/>
    <property type="evidence" value="ECO:0007669"/>
    <property type="project" value="UniProtKB-UniRule"/>
</dbReference>
<dbReference type="GO" id="GO:0006526">
    <property type="term" value="P:L-arginine biosynthetic process"/>
    <property type="evidence" value="ECO:0007669"/>
    <property type="project" value="UniProtKB-UniPathway"/>
</dbReference>
<dbReference type="GO" id="GO:0051259">
    <property type="term" value="P:protein complex oligomerization"/>
    <property type="evidence" value="ECO:0007669"/>
    <property type="project" value="InterPro"/>
</dbReference>
<dbReference type="GO" id="GO:1900079">
    <property type="term" value="P:regulation of arginine biosynthetic process"/>
    <property type="evidence" value="ECO:0007669"/>
    <property type="project" value="UniProtKB-UniRule"/>
</dbReference>
<dbReference type="GO" id="GO:0000821">
    <property type="term" value="P:regulation of arginine metabolic process"/>
    <property type="evidence" value="ECO:0000318"/>
    <property type="project" value="GO_Central"/>
</dbReference>
<dbReference type="Gene3D" id="3.30.1360.40">
    <property type="match status" value="1"/>
</dbReference>
<dbReference type="Gene3D" id="1.10.10.10">
    <property type="entry name" value="Winged helix-like DNA-binding domain superfamily/Winged helix DNA-binding domain"/>
    <property type="match status" value="1"/>
</dbReference>
<dbReference type="HAMAP" id="MF_00173">
    <property type="entry name" value="Arg_repressor"/>
    <property type="match status" value="1"/>
</dbReference>
<dbReference type="InterPro" id="IPR001669">
    <property type="entry name" value="Arg_repress"/>
</dbReference>
<dbReference type="InterPro" id="IPR020899">
    <property type="entry name" value="Arg_repress_C"/>
</dbReference>
<dbReference type="InterPro" id="IPR036251">
    <property type="entry name" value="Arg_repress_C_sf"/>
</dbReference>
<dbReference type="InterPro" id="IPR020900">
    <property type="entry name" value="Arg_repress_DNA-bd"/>
</dbReference>
<dbReference type="InterPro" id="IPR036388">
    <property type="entry name" value="WH-like_DNA-bd_sf"/>
</dbReference>
<dbReference type="InterPro" id="IPR036390">
    <property type="entry name" value="WH_DNA-bd_sf"/>
</dbReference>
<dbReference type="NCBIfam" id="TIGR01529">
    <property type="entry name" value="argR_whole"/>
    <property type="match status" value="1"/>
</dbReference>
<dbReference type="NCBIfam" id="NF003457">
    <property type="entry name" value="PRK05066.1"/>
    <property type="match status" value="1"/>
</dbReference>
<dbReference type="PANTHER" id="PTHR34471">
    <property type="entry name" value="ARGININE REPRESSOR"/>
    <property type="match status" value="1"/>
</dbReference>
<dbReference type="PANTHER" id="PTHR34471:SF1">
    <property type="entry name" value="ARGININE REPRESSOR"/>
    <property type="match status" value="1"/>
</dbReference>
<dbReference type="Pfam" id="PF01316">
    <property type="entry name" value="Arg_repressor"/>
    <property type="match status" value="1"/>
</dbReference>
<dbReference type="Pfam" id="PF02863">
    <property type="entry name" value="Arg_repressor_C"/>
    <property type="match status" value="1"/>
</dbReference>
<dbReference type="PRINTS" id="PR01467">
    <property type="entry name" value="ARGREPRESSOR"/>
</dbReference>
<dbReference type="SUPFAM" id="SSF55252">
    <property type="entry name" value="C-terminal domain of arginine repressor"/>
    <property type="match status" value="1"/>
</dbReference>
<dbReference type="SUPFAM" id="SSF46785">
    <property type="entry name" value="Winged helix' DNA-binding domain"/>
    <property type="match status" value="1"/>
</dbReference>
<sequence>MQTTKNQDDLVRIFKAILKEERFGSQSEIVTALQAEGFTNINQSKVSRMLSKFGAVRTRNAKQEMVYCLPAELGVPTAGSPLKNLVLDVDHNQAMIVVRTSPGAAQLIARLLDSIGKPEGILGTIAGDDTIFICPSSIQDIADTLETIKSLFNYAE</sequence>
<accession>Q8EIR6</accession>
<keyword id="KW-0028">Amino-acid biosynthesis</keyword>
<keyword id="KW-0055">Arginine biosynthesis</keyword>
<keyword id="KW-0963">Cytoplasm</keyword>
<keyword id="KW-0238">DNA-binding</keyword>
<keyword id="KW-1185">Reference proteome</keyword>
<keyword id="KW-0678">Repressor</keyword>
<keyword id="KW-0804">Transcription</keyword>
<keyword id="KW-0805">Transcription regulation</keyword>
<name>ARGR_SHEON</name>
<comment type="function">
    <text evidence="1">Regulates arginine biosynthesis genes.</text>
</comment>
<comment type="pathway">
    <text>Amino-acid biosynthesis; L-arginine biosynthesis [regulation].</text>
</comment>
<comment type="subcellular location">
    <subcellularLocation>
        <location evidence="1">Cytoplasm</location>
    </subcellularLocation>
</comment>
<comment type="similarity">
    <text evidence="1">Belongs to the ArgR family.</text>
</comment>
<evidence type="ECO:0000255" key="1">
    <source>
        <dbReference type="HAMAP-Rule" id="MF_00173"/>
    </source>
</evidence>
<proteinExistence type="inferred from homology"/>
<reference key="1">
    <citation type="journal article" date="2002" name="Nat. Biotechnol.">
        <title>Genome sequence of the dissimilatory metal ion-reducing bacterium Shewanella oneidensis.</title>
        <authorList>
            <person name="Heidelberg J.F."/>
            <person name="Paulsen I.T."/>
            <person name="Nelson K.E."/>
            <person name="Gaidos E.J."/>
            <person name="Nelson W.C."/>
            <person name="Read T.D."/>
            <person name="Eisen J.A."/>
            <person name="Seshadri R."/>
            <person name="Ward N.L."/>
            <person name="Methe B.A."/>
            <person name="Clayton R.A."/>
            <person name="Meyer T."/>
            <person name="Tsapin A."/>
            <person name="Scott J."/>
            <person name="Beanan M.J."/>
            <person name="Brinkac L.M."/>
            <person name="Daugherty S.C."/>
            <person name="DeBoy R.T."/>
            <person name="Dodson R.J."/>
            <person name="Durkin A.S."/>
            <person name="Haft D.H."/>
            <person name="Kolonay J.F."/>
            <person name="Madupu R."/>
            <person name="Peterson J.D."/>
            <person name="Umayam L.A."/>
            <person name="White O."/>
            <person name="Wolf A.M."/>
            <person name="Vamathevan J.J."/>
            <person name="Weidman J.F."/>
            <person name="Impraim M."/>
            <person name="Lee K."/>
            <person name="Berry K.J."/>
            <person name="Lee C."/>
            <person name="Mueller J."/>
            <person name="Khouri H.M."/>
            <person name="Gill J."/>
            <person name="Utterback T.R."/>
            <person name="McDonald L.A."/>
            <person name="Feldblyum T.V."/>
            <person name="Smith H.O."/>
            <person name="Venter J.C."/>
            <person name="Nealson K.H."/>
            <person name="Fraser C.M."/>
        </authorList>
    </citation>
    <scope>NUCLEOTIDE SEQUENCE [LARGE SCALE GENOMIC DNA]</scope>
    <source>
        <strain>ATCC 700550 / JCM 31522 / CIP 106686 / LMG 19005 / NCIMB 14063 / MR-1</strain>
    </source>
</reference>